<comment type="function">
    <text evidence="1">Required for rescue of stalled ribosomes mediated by trans-translation. Binds to transfer-messenger RNA (tmRNA), required for stable association of tmRNA with ribosomes. tmRNA and SmpB together mimic tRNA shape, replacing the anticodon stem-loop with SmpB. tmRNA is encoded by the ssrA gene; the 2 termini fold to resemble tRNA(Ala) and it encodes a 'tag peptide', a short internal open reading frame. During trans-translation Ala-aminoacylated tmRNA acts like a tRNA, entering the A-site of stalled ribosomes, displacing the stalled mRNA. The ribosome then switches to translate the ORF on the tmRNA; the nascent peptide is terminated with the 'tag peptide' encoded by the tmRNA and targeted for degradation. The ribosome is freed to recommence translation, which seems to be the essential function of trans-translation.</text>
</comment>
<comment type="subcellular location">
    <subcellularLocation>
        <location evidence="1">Cytoplasm</location>
    </subcellularLocation>
    <text evidence="1">The tmRNA-SmpB complex associates with stalled 70S ribosomes.</text>
</comment>
<comment type="similarity">
    <text evidence="1">Belongs to the SmpB family.</text>
</comment>
<accession>B1LTE0</accession>
<evidence type="ECO:0000255" key="1">
    <source>
        <dbReference type="HAMAP-Rule" id="MF_00023"/>
    </source>
</evidence>
<evidence type="ECO:0000256" key="2">
    <source>
        <dbReference type="SAM" id="MobiDB-lite"/>
    </source>
</evidence>
<proteinExistence type="inferred from homology"/>
<reference key="1">
    <citation type="submission" date="2008-03" db="EMBL/GenBank/DDBJ databases">
        <title>Complete sequence of chromosome of Methylobacterium radiotolerans JCM 2831.</title>
        <authorList>
            <consortium name="US DOE Joint Genome Institute"/>
            <person name="Copeland A."/>
            <person name="Lucas S."/>
            <person name="Lapidus A."/>
            <person name="Glavina del Rio T."/>
            <person name="Dalin E."/>
            <person name="Tice H."/>
            <person name="Bruce D."/>
            <person name="Goodwin L."/>
            <person name="Pitluck S."/>
            <person name="Kiss H."/>
            <person name="Brettin T."/>
            <person name="Detter J.C."/>
            <person name="Han C."/>
            <person name="Kuske C.R."/>
            <person name="Schmutz J."/>
            <person name="Larimer F."/>
            <person name="Land M."/>
            <person name="Hauser L."/>
            <person name="Kyrpides N."/>
            <person name="Mikhailova N."/>
            <person name="Marx C.J."/>
            <person name="Richardson P."/>
        </authorList>
    </citation>
    <scope>NUCLEOTIDE SEQUENCE [LARGE SCALE GENOMIC DNA]</scope>
    <source>
        <strain>ATCC 27329 / DSM 1819 / JCM 2831 / NBRC 15690 / NCIMB 10815 / 0-1</strain>
    </source>
</reference>
<dbReference type="EMBL" id="CP001001">
    <property type="protein sequence ID" value="ACB23886.1"/>
    <property type="molecule type" value="Genomic_DNA"/>
</dbReference>
<dbReference type="RefSeq" id="WP_012318872.1">
    <property type="nucleotide sequence ID" value="NC_010505.1"/>
</dbReference>
<dbReference type="SMR" id="B1LTE0"/>
<dbReference type="STRING" id="426355.Mrad2831_1891"/>
<dbReference type="GeneID" id="6137920"/>
<dbReference type="KEGG" id="mrd:Mrad2831_1891"/>
<dbReference type="eggNOG" id="COG0691">
    <property type="taxonomic scope" value="Bacteria"/>
</dbReference>
<dbReference type="HOGENOM" id="CLU_108953_0_1_5"/>
<dbReference type="OrthoDB" id="9805462at2"/>
<dbReference type="Proteomes" id="UP000006589">
    <property type="component" value="Chromosome"/>
</dbReference>
<dbReference type="GO" id="GO:0005829">
    <property type="term" value="C:cytosol"/>
    <property type="evidence" value="ECO:0007669"/>
    <property type="project" value="TreeGrafter"/>
</dbReference>
<dbReference type="GO" id="GO:0003723">
    <property type="term" value="F:RNA binding"/>
    <property type="evidence" value="ECO:0007669"/>
    <property type="project" value="UniProtKB-UniRule"/>
</dbReference>
<dbReference type="GO" id="GO:0070929">
    <property type="term" value="P:trans-translation"/>
    <property type="evidence" value="ECO:0007669"/>
    <property type="project" value="UniProtKB-UniRule"/>
</dbReference>
<dbReference type="CDD" id="cd09294">
    <property type="entry name" value="SmpB"/>
    <property type="match status" value="1"/>
</dbReference>
<dbReference type="Gene3D" id="2.40.280.10">
    <property type="match status" value="1"/>
</dbReference>
<dbReference type="HAMAP" id="MF_00023">
    <property type="entry name" value="SmpB"/>
    <property type="match status" value="1"/>
</dbReference>
<dbReference type="InterPro" id="IPR023620">
    <property type="entry name" value="SmpB"/>
</dbReference>
<dbReference type="InterPro" id="IPR000037">
    <property type="entry name" value="SsrA-bd_prot"/>
</dbReference>
<dbReference type="InterPro" id="IPR020081">
    <property type="entry name" value="SsrA-bd_prot_CS"/>
</dbReference>
<dbReference type="NCBIfam" id="NF003843">
    <property type="entry name" value="PRK05422.1"/>
    <property type="match status" value="1"/>
</dbReference>
<dbReference type="NCBIfam" id="TIGR00086">
    <property type="entry name" value="smpB"/>
    <property type="match status" value="1"/>
</dbReference>
<dbReference type="PANTHER" id="PTHR30308:SF2">
    <property type="entry name" value="SSRA-BINDING PROTEIN"/>
    <property type="match status" value="1"/>
</dbReference>
<dbReference type="PANTHER" id="PTHR30308">
    <property type="entry name" value="TMRNA-BINDING COMPONENT OF TRANS-TRANSLATION TAGGING COMPLEX"/>
    <property type="match status" value="1"/>
</dbReference>
<dbReference type="Pfam" id="PF01668">
    <property type="entry name" value="SmpB"/>
    <property type="match status" value="1"/>
</dbReference>
<dbReference type="SUPFAM" id="SSF74982">
    <property type="entry name" value="Small protein B (SmpB)"/>
    <property type="match status" value="1"/>
</dbReference>
<dbReference type="PROSITE" id="PS01317">
    <property type="entry name" value="SSRP"/>
    <property type="match status" value="1"/>
</dbReference>
<feature type="chain" id="PRO_1000090164" description="SsrA-binding protein">
    <location>
        <begin position="1"/>
        <end position="157"/>
    </location>
</feature>
<feature type="region of interest" description="Disordered" evidence="2">
    <location>
        <begin position="126"/>
        <end position="157"/>
    </location>
</feature>
<feature type="compositionally biased region" description="Basic and acidic residues" evidence="2">
    <location>
        <begin position="132"/>
        <end position="157"/>
    </location>
</feature>
<organism>
    <name type="scientific">Methylobacterium radiotolerans (strain ATCC 27329 / DSM 1819 / JCM 2831 / NBRC 15690 / NCIMB 10815 / 0-1)</name>
    <dbReference type="NCBI Taxonomy" id="426355"/>
    <lineage>
        <taxon>Bacteria</taxon>
        <taxon>Pseudomonadati</taxon>
        <taxon>Pseudomonadota</taxon>
        <taxon>Alphaproteobacteria</taxon>
        <taxon>Hyphomicrobiales</taxon>
        <taxon>Methylobacteriaceae</taxon>
        <taxon>Methylobacterium</taxon>
    </lineage>
</organism>
<name>SSRP_METRJ</name>
<keyword id="KW-0963">Cytoplasm</keyword>
<keyword id="KW-0694">RNA-binding</keyword>
<protein>
    <recommendedName>
        <fullName evidence="1">SsrA-binding protein</fullName>
    </recommendedName>
    <alternativeName>
        <fullName evidence="1">Small protein B</fullName>
    </alternativeName>
</protein>
<gene>
    <name evidence="1" type="primary">smpB</name>
    <name type="ordered locus">Mrad2831_1891</name>
</gene>
<sequence length="157" mass="17915">MAPKPEPSRRIVADNRAARYHYTIEDTLEAGIALTGTEVKSLRGGKATIGEAYAGPSGTDLMLFNAYIPEYLEANRFNHDTKRPRRLLLHRRQINKLIGATQRQGYTVVPLKIYFNDKGRAKVELGLGKGKQAHDKREAVKERDWQRDRARLMRDRG</sequence>